<reference key="1">
    <citation type="journal article" date="2008" name="DNA Res.">
        <title>Comparative genome analysis of Lactobacillus reuteri and Lactobacillus fermentum reveal a genomic island for reuterin and cobalamin production.</title>
        <authorList>
            <person name="Morita H."/>
            <person name="Toh H."/>
            <person name="Fukuda S."/>
            <person name="Horikawa H."/>
            <person name="Oshima K."/>
            <person name="Suzuki T."/>
            <person name="Murakami M."/>
            <person name="Hisamatsu S."/>
            <person name="Kato Y."/>
            <person name="Takizawa T."/>
            <person name="Fukuoka H."/>
            <person name="Yoshimura T."/>
            <person name="Itoh K."/>
            <person name="O'Sullivan D.J."/>
            <person name="McKay L.L."/>
            <person name="Ohno H."/>
            <person name="Kikuchi J."/>
            <person name="Masaoka T."/>
            <person name="Hattori M."/>
        </authorList>
    </citation>
    <scope>NUCLEOTIDE SEQUENCE [LARGE SCALE GENOMIC DNA]</scope>
    <source>
        <strain>JCM 1112</strain>
    </source>
</reference>
<dbReference type="EC" id="2.7.1.148" evidence="1"/>
<dbReference type="EMBL" id="AP007281">
    <property type="protein sequence ID" value="BAG24722.1"/>
    <property type="molecule type" value="Genomic_DNA"/>
</dbReference>
<dbReference type="RefSeq" id="WP_003667188.1">
    <property type="nucleotide sequence ID" value="NC_010609.1"/>
</dbReference>
<dbReference type="SMR" id="B2G5J0"/>
<dbReference type="KEGG" id="lrf:LAR_0206"/>
<dbReference type="HOGENOM" id="CLU_053057_1_1_9"/>
<dbReference type="UniPathway" id="UPA00056">
    <property type="reaction ID" value="UER00094"/>
</dbReference>
<dbReference type="GO" id="GO:0050515">
    <property type="term" value="F:4-(cytidine 5'-diphospho)-2-C-methyl-D-erythritol kinase activity"/>
    <property type="evidence" value="ECO:0007669"/>
    <property type="project" value="UniProtKB-UniRule"/>
</dbReference>
<dbReference type="GO" id="GO:0005524">
    <property type="term" value="F:ATP binding"/>
    <property type="evidence" value="ECO:0007669"/>
    <property type="project" value="UniProtKB-UniRule"/>
</dbReference>
<dbReference type="GO" id="GO:0019288">
    <property type="term" value="P:isopentenyl diphosphate biosynthetic process, methylerythritol 4-phosphate pathway"/>
    <property type="evidence" value="ECO:0007669"/>
    <property type="project" value="UniProtKB-UniRule"/>
</dbReference>
<dbReference type="GO" id="GO:0016114">
    <property type="term" value="P:terpenoid biosynthetic process"/>
    <property type="evidence" value="ECO:0007669"/>
    <property type="project" value="InterPro"/>
</dbReference>
<dbReference type="Gene3D" id="3.30.230.10">
    <property type="match status" value="1"/>
</dbReference>
<dbReference type="Gene3D" id="3.30.70.890">
    <property type="entry name" value="GHMP kinase, C-terminal domain"/>
    <property type="match status" value="1"/>
</dbReference>
<dbReference type="HAMAP" id="MF_00061">
    <property type="entry name" value="IspE"/>
    <property type="match status" value="1"/>
</dbReference>
<dbReference type="InterPro" id="IPR013750">
    <property type="entry name" value="GHMP_kinase_C_dom"/>
</dbReference>
<dbReference type="InterPro" id="IPR036554">
    <property type="entry name" value="GHMP_kinase_C_sf"/>
</dbReference>
<dbReference type="InterPro" id="IPR006204">
    <property type="entry name" value="GHMP_kinase_N_dom"/>
</dbReference>
<dbReference type="InterPro" id="IPR004424">
    <property type="entry name" value="IspE"/>
</dbReference>
<dbReference type="InterPro" id="IPR020568">
    <property type="entry name" value="Ribosomal_Su5_D2-typ_SF"/>
</dbReference>
<dbReference type="InterPro" id="IPR014721">
    <property type="entry name" value="Ribsml_uS5_D2-typ_fold_subgr"/>
</dbReference>
<dbReference type="NCBIfam" id="TIGR00154">
    <property type="entry name" value="ispE"/>
    <property type="match status" value="1"/>
</dbReference>
<dbReference type="PANTHER" id="PTHR43527">
    <property type="entry name" value="4-DIPHOSPHOCYTIDYL-2-C-METHYL-D-ERYTHRITOL KINASE, CHLOROPLASTIC"/>
    <property type="match status" value="1"/>
</dbReference>
<dbReference type="PANTHER" id="PTHR43527:SF2">
    <property type="entry name" value="4-DIPHOSPHOCYTIDYL-2-C-METHYL-D-ERYTHRITOL KINASE, CHLOROPLASTIC"/>
    <property type="match status" value="1"/>
</dbReference>
<dbReference type="Pfam" id="PF08544">
    <property type="entry name" value="GHMP_kinases_C"/>
    <property type="match status" value="1"/>
</dbReference>
<dbReference type="Pfam" id="PF00288">
    <property type="entry name" value="GHMP_kinases_N"/>
    <property type="match status" value="1"/>
</dbReference>
<dbReference type="PIRSF" id="PIRSF010376">
    <property type="entry name" value="IspE"/>
    <property type="match status" value="1"/>
</dbReference>
<dbReference type="SUPFAM" id="SSF55060">
    <property type="entry name" value="GHMP Kinase, C-terminal domain"/>
    <property type="match status" value="1"/>
</dbReference>
<dbReference type="SUPFAM" id="SSF54211">
    <property type="entry name" value="Ribosomal protein S5 domain 2-like"/>
    <property type="match status" value="1"/>
</dbReference>
<accession>B2G5J0</accession>
<organism>
    <name type="scientific">Limosilactobacillus reuteri subsp. reuteri (strain JCM 1112)</name>
    <name type="common">Lactobacillus reuteri</name>
    <dbReference type="NCBI Taxonomy" id="557433"/>
    <lineage>
        <taxon>Bacteria</taxon>
        <taxon>Bacillati</taxon>
        <taxon>Bacillota</taxon>
        <taxon>Bacilli</taxon>
        <taxon>Lactobacillales</taxon>
        <taxon>Lactobacillaceae</taxon>
        <taxon>Limosilactobacillus</taxon>
    </lineage>
</organism>
<gene>
    <name evidence="1" type="primary">ispE</name>
    <name type="ordered locus">LAR_0206</name>
</gene>
<name>ISPE_LIMRJ</name>
<comment type="function">
    <text evidence="1">Catalyzes the phosphorylation of the position 2 hydroxy group of 4-diphosphocytidyl-2C-methyl-D-erythritol.</text>
</comment>
<comment type="catalytic activity">
    <reaction evidence="1">
        <text>4-CDP-2-C-methyl-D-erythritol + ATP = 4-CDP-2-C-methyl-D-erythritol 2-phosphate + ADP + H(+)</text>
        <dbReference type="Rhea" id="RHEA:18437"/>
        <dbReference type="ChEBI" id="CHEBI:15378"/>
        <dbReference type="ChEBI" id="CHEBI:30616"/>
        <dbReference type="ChEBI" id="CHEBI:57823"/>
        <dbReference type="ChEBI" id="CHEBI:57919"/>
        <dbReference type="ChEBI" id="CHEBI:456216"/>
        <dbReference type="EC" id="2.7.1.148"/>
    </reaction>
</comment>
<comment type="pathway">
    <text evidence="1">Isoprenoid biosynthesis; isopentenyl diphosphate biosynthesis via DXP pathway; isopentenyl diphosphate from 1-deoxy-D-xylulose 5-phosphate: step 3/6.</text>
</comment>
<comment type="similarity">
    <text evidence="1">Belongs to the GHMP kinase family. IspE subfamily.</text>
</comment>
<protein>
    <recommendedName>
        <fullName evidence="1">4-diphosphocytidyl-2-C-methyl-D-erythritol kinase</fullName>
        <shortName evidence="1">CMK</shortName>
        <ecNumber evidence="1">2.7.1.148</ecNumber>
    </recommendedName>
    <alternativeName>
        <fullName evidence="1">4-(cytidine-5'-diphospho)-2-C-methyl-D-erythritol kinase</fullName>
    </alternativeName>
</protein>
<sequence>MIVTEKAPAKLNLSLDTPMRYFDGSPQWDMVMVSADLADYVTVETHRRPATIKVYTNSGFLPNDQRNLAYQAAHILRSRFHCKDGVTIRIKKQIPVAAGLGGGSSDAAAVLRALNSIWRLGLSLSELAKIALTIDSDVPYCIYNKLAHVTGHGEKIELLPPQPHYWAVIAKQKISVSTPQILRQINYEKLQHLNNEALLTNLKKEDWQEATKYMGNVLEPLTMKFYPEIGRLKNKMKELGADVAQMSGTGPTVFAICHTESRAKRIQNSIRGFCRDVHVVTLL</sequence>
<evidence type="ECO:0000255" key="1">
    <source>
        <dbReference type="HAMAP-Rule" id="MF_00061"/>
    </source>
</evidence>
<keyword id="KW-0067">ATP-binding</keyword>
<keyword id="KW-0414">Isoprene biosynthesis</keyword>
<keyword id="KW-0418">Kinase</keyword>
<keyword id="KW-0547">Nucleotide-binding</keyword>
<keyword id="KW-0808">Transferase</keyword>
<feature type="chain" id="PRO_1000092093" description="4-diphosphocytidyl-2-C-methyl-D-erythritol kinase">
    <location>
        <begin position="1"/>
        <end position="283"/>
    </location>
</feature>
<feature type="active site" evidence="1">
    <location>
        <position position="10"/>
    </location>
</feature>
<feature type="active site" evidence="1">
    <location>
        <position position="137"/>
    </location>
</feature>
<feature type="binding site" evidence="1">
    <location>
        <begin position="95"/>
        <end position="105"/>
    </location>
    <ligand>
        <name>ATP</name>
        <dbReference type="ChEBI" id="CHEBI:30616"/>
    </ligand>
</feature>
<proteinExistence type="inferred from homology"/>